<dbReference type="EC" id="1.2.1.70" evidence="1"/>
<dbReference type="EMBL" id="AP006716">
    <property type="protein sequence ID" value="BAE04564.1"/>
    <property type="molecule type" value="Genomic_DNA"/>
</dbReference>
<dbReference type="RefSeq" id="WP_011275553.1">
    <property type="nucleotide sequence ID" value="NC_007168.1"/>
</dbReference>
<dbReference type="SMR" id="Q4L711"/>
<dbReference type="KEGG" id="sha:SH1255"/>
<dbReference type="eggNOG" id="COG0373">
    <property type="taxonomic scope" value="Bacteria"/>
</dbReference>
<dbReference type="HOGENOM" id="CLU_035113_2_2_9"/>
<dbReference type="OrthoDB" id="110209at2"/>
<dbReference type="UniPathway" id="UPA00251">
    <property type="reaction ID" value="UER00316"/>
</dbReference>
<dbReference type="Proteomes" id="UP000000543">
    <property type="component" value="Chromosome"/>
</dbReference>
<dbReference type="GO" id="GO:0008883">
    <property type="term" value="F:glutamyl-tRNA reductase activity"/>
    <property type="evidence" value="ECO:0007669"/>
    <property type="project" value="UniProtKB-UniRule"/>
</dbReference>
<dbReference type="GO" id="GO:0050661">
    <property type="term" value="F:NADP binding"/>
    <property type="evidence" value="ECO:0007669"/>
    <property type="project" value="InterPro"/>
</dbReference>
<dbReference type="GO" id="GO:0006782">
    <property type="term" value="P:protoporphyrinogen IX biosynthetic process"/>
    <property type="evidence" value="ECO:0007669"/>
    <property type="project" value="UniProtKB-UniRule"/>
</dbReference>
<dbReference type="CDD" id="cd05213">
    <property type="entry name" value="NAD_bind_Glutamyl_tRNA_reduct"/>
    <property type="match status" value="1"/>
</dbReference>
<dbReference type="FunFam" id="3.30.460.30:FF:000001">
    <property type="entry name" value="Glutamyl-tRNA reductase"/>
    <property type="match status" value="1"/>
</dbReference>
<dbReference type="FunFam" id="3.40.50.720:FF:000031">
    <property type="entry name" value="Glutamyl-tRNA reductase"/>
    <property type="match status" value="1"/>
</dbReference>
<dbReference type="Gene3D" id="3.30.460.30">
    <property type="entry name" value="Glutamyl-tRNA reductase, N-terminal domain"/>
    <property type="match status" value="1"/>
</dbReference>
<dbReference type="Gene3D" id="3.40.50.720">
    <property type="entry name" value="NAD(P)-binding Rossmann-like Domain"/>
    <property type="match status" value="1"/>
</dbReference>
<dbReference type="HAMAP" id="MF_00087">
    <property type="entry name" value="Glu_tRNA_reductase"/>
    <property type="match status" value="1"/>
</dbReference>
<dbReference type="InterPro" id="IPR000343">
    <property type="entry name" value="4pyrrol_synth_GluRdtase"/>
</dbReference>
<dbReference type="InterPro" id="IPR015896">
    <property type="entry name" value="4pyrrol_synth_GluRdtase_dimer"/>
</dbReference>
<dbReference type="InterPro" id="IPR015895">
    <property type="entry name" value="4pyrrol_synth_GluRdtase_N"/>
</dbReference>
<dbReference type="InterPro" id="IPR018214">
    <property type="entry name" value="GluRdtase_CS"/>
</dbReference>
<dbReference type="InterPro" id="IPR036453">
    <property type="entry name" value="GluRdtase_dimer_dom_sf"/>
</dbReference>
<dbReference type="InterPro" id="IPR036343">
    <property type="entry name" value="GluRdtase_N_sf"/>
</dbReference>
<dbReference type="InterPro" id="IPR036291">
    <property type="entry name" value="NAD(P)-bd_dom_sf"/>
</dbReference>
<dbReference type="InterPro" id="IPR006151">
    <property type="entry name" value="Shikm_DH/Glu-tRNA_Rdtase"/>
</dbReference>
<dbReference type="NCBIfam" id="TIGR01035">
    <property type="entry name" value="hemA"/>
    <property type="match status" value="1"/>
</dbReference>
<dbReference type="PANTHER" id="PTHR43120">
    <property type="entry name" value="GLUTAMYL-TRNA REDUCTASE 1, CHLOROPLASTIC"/>
    <property type="match status" value="1"/>
</dbReference>
<dbReference type="PANTHER" id="PTHR43120:SF1">
    <property type="entry name" value="GLUTAMYL-TRNA REDUCTASE 1, CHLOROPLASTIC"/>
    <property type="match status" value="1"/>
</dbReference>
<dbReference type="Pfam" id="PF00745">
    <property type="entry name" value="GlutR_dimer"/>
    <property type="match status" value="1"/>
</dbReference>
<dbReference type="Pfam" id="PF05201">
    <property type="entry name" value="GlutR_N"/>
    <property type="match status" value="1"/>
</dbReference>
<dbReference type="Pfam" id="PF01488">
    <property type="entry name" value="Shikimate_DH"/>
    <property type="match status" value="1"/>
</dbReference>
<dbReference type="PIRSF" id="PIRSF000445">
    <property type="entry name" value="4pyrrol_synth_GluRdtase"/>
    <property type="match status" value="1"/>
</dbReference>
<dbReference type="SUPFAM" id="SSF69742">
    <property type="entry name" value="Glutamyl tRNA-reductase catalytic, N-terminal domain"/>
    <property type="match status" value="1"/>
</dbReference>
<dbReference type="SUPFAM" id="SSF69075">
    <property type="entry name" value="Glutamyl tRNA-reductase dimerization domain"/>
    <property type="match status" value="1"/>
</dbReference>
<dbReference type="SUPFAM" id="SSF51735">
    <property type="entry name" value="NAD(P)-binding Rossmann-fold domains"/>
    <property type="match status" value="1"/>
</dbReference>
<dbReference type="PROSITE" id="PS00747">
    <property type="entry name" value="GLUTR"/>
    <property type="match status" value="1"/>
</dbReference>
<feature type="chain" id="PRO_1000004704" description="Glutamyl-tRNA reductase">
    <location>
        <begin position="1"/>
        <end position="448"/>
    </location>
</feature>
<feature type="active site" description="Nucleophile" evidence="1">
    <location>
        <position position="50"/>
    </location>
</feature>
<feature type="binding site" evidence="1">
    <location>
        <begin position="49"/>
        <end position="52"/>
    </location>
    <ligand>
        <name>substrate</name>
    </ligand>
</feature>
<feature type="binding site" evidence="1">
    <location>
        <position position="109"/>
    </location>
    <ligand>
        <name>substrate</name>
    </ligand>
</feature>
<feature type="binding site" evidence="1">
    <location>
        <begin position="114"/>
        <end position="116"/>
    </location>
    <ligand>
        <name>substrate</name>
    </ligand>
</feature>
<feature type="binding site" evidence="1">
    <location>
        <position position="120"/>
    </location>
    <ligand>
        <name>substrate</name>
    </ligand>
</feature>
<feature type="binding site" evidence="1">
    <location>
        <begin position="189"/>
        <end position="194"/>
    </location>
    <ligand>
        <name>NADP(+)</name>
        <dbReference type="ChEBI" id="CHEBI:58349"/>
    </ligand>
</feature>
<feature type="site" description="Important for activity" evidence="1">
    <location>
        <position position="99"/>
    </location>
</feature>
<proteinExistence type="inferred from homology"/>
<gene>
    <name evidence="1" type="primary">hemA</name>
    <name type="ordered locus">SH1255</name>
</gene>
<reference key="1">
    <citation type="journal article" date="2005" name="J. Bacteriol.">
        <title>Whole-genome sequencing of Staphylococcus haemolyticus uncovers the extreme plasticity of its genome and the evolution of human-colonizing staphylococcal species.</title>
        <authorList>
            <person name="Takeuchi F."/>
            <person name="Watanabe S."/>
            <person name="Baba T."/>
            <person name="Yuzawa H."/>
            <person name="Ito T."/>
            <person name="Morimoto Y."/>
            <person name="Kuroda M."/>
            <person name="Cui L."/>
            <person name="Takahashi M."/>
            <person name="Ankai A."/>
            <person name="Baba S."/>
            <person name="Fukui S."/>
            <person name="Lee J.C."/>
            <person name="Hiramatsu K."/>
        </authorList>
    </citation>
    <scope>NUCLEOTIDE SEQUENCE [LARGE SCALE GENOMIC DNA]</scope>
    <source>
        <strain>JCSC1435</strain>
    </source>
</reference>
<comment type="function">
    <text evidence="1">Catalyzes the NADPH-dependent reduction of glutamyl-tRNA(Glu) to glutamate 1-semialdehyde (GSA).</text>
</comment>
<comment type="catalytic activity">
    <reaction evidence="1">
        <text>(S)-4-amino-5-oxopentanoate + tRNA(Glu) + NADP(+) = L-glutamyl-tRNA(Glu) + NADPH + H(+)</text>
        <dbReference type="Rhea" id="RHEA:12344"/>
        <dbReference type="Rhea" id="RHEA-COMP:9663"/>
        <dbReference type="Rhea" id="RHEA-COMP:9680"/>
        <dbReference type="ChEBI" id="CHEBI:15378"/>
        <dbReference type="ChEBI" id="CHEBI:57501"/>
        <dbReference type="ChEBI" id="CHEBI:57783"/>
        <dbReference type="ChEBI" id="CHEBI:58349"/>
        <dbReference type="ChEBI" id="CHEBI:78442"/>
        <dbReference type="ChEBI" id="CHEBI:78520"/>
        <dbReference type="EC" id="1.2.1.70"/>
    </reaction>
</comment>
<comment type="pathway">
    <text evidence="1">Porphyrin-containing compound metabolism; protoporphyrin-IX biosynthesis; 5-aminolevulinate from L-glutamyl-tRNA(Glu): step 1/2.</text>
</comment>
<comment type="subunit">
    <text evidence="1">Homodimer.</text>
</comment>
<comment type="domain">
    <text evidence="1">Possesses an unusual extended V-shaped dimeric structure with each monomer consisting of three distinct domains arranged along a curved 'spinal' alpha-helix. The N-terminal catalytic domain specifically recognizes the glutamate moiety of the substrate. The second domain is the NADPH-binding domain, and the third C-terminal domain is responsible for dimerization.</text>
</comment>
<comment type="miscellaneous">
    <text evidence="1">During catalysis, the active site Cys acts as a nucleophile attacking the alpha-carbonyl group of tRNA-bound glutamate with the formation of a thioester intermediate between enzyme and glutamate, and the concomitant release of tRNA(Glu). The thioester intermediate is finally reduced by direct hydride transfer from NADPH, to form the product GSA.</text>
</comment>
<comment type="similarity">
    <text evidence="1">Belongs to the glutamyl-tRNA reductase family.</text>
</comment>
<organism>
    <name type="scientific">Staphylococcus haemolyticus (strain JCSC1435)</name>
    <dbReference type="NCBI Taxonomy" id="279808"/>
    <lineage>
        <taxon>Bacteria</taxon>
        <taxon>Bacillati</taxon>
        <taxon>Bacillota</taxon>
        <taxon>Bacilli</taxon>
        <taxon>Bacillales</taxon>
        <taxon>Staphylococcaceae</taxon>
        <taxon>Staphylococcus</taxon>
    </lineage>
</organism>
<accession>Q4L711</accession>
<evidence type="ECO:0000255" key="1">
    <source>
        <dbReference type="HAMAP-Rule" id="MF_00087"/>
    </source>
</evidence>
<protein>
    <recommendedName>
        <fullName evidence="1">Glutamyl-tRNA reductase</fullName>
        <shortName evidence="1">GluTR</shortName>
        <ecNumber evidence="1">1.2.1.70</ecNumber>
    </recommendedName>
</protein>
<sequence length="448" mass="50307">MHFIAISINHRTADVALREQVAFRDDALRLAHEDLFETKSILENVILSTCNRTEVYAIVDQIHTGRYYIQRFLARSFGFDVDDIKNMSEVKVGDEAVEHLLRVTSGLDSIVLGETQILGQMRDAFFLAQDIQTTGTIFNHLFKQAITFAKKAHNETDIADNAVSVSYAAVELAKKVFGKLKGKQTIIIGAGEMSELSLLNLLGSGIDDITVVNRTETNAYKLATKHGVNYNTLESLPTLLTNADIVISSTSSPDFIVTKSMIESVNLKRKASSLLLIDIAVPRDIEPNVNISENIFSYDVDDLKGLVDANLRERQMAADFIASQIPDEVQAHNDWVNMLGVVPVIRALREKAMTIQSETMDSIDRKLPDLSDRERTIISKHTKSIINQMLKDPIKQAKELSNDKRSNEKLELFQNIFDIDAADPYEDIKAHKAQKEKEVSIRHIFSFE</sequence>
<keyword id="KW-0521">NADP</keyword>
<keyword id="KW-0560">Oxidoreductase</keyword>
<keyword id="KW-0627">Porphyrin biosynthesis</keyword>
<name>HEM1_STAHJ</name>